<keyword id="KW-0030">Aminoacyl-tRNA synthetase</keyword>
<keyword id="KW-0067">ATP-binding</keyword>
<keyword id="KW-0963">Cytoplasm</keyword>
<keyword id="KW-0436">Ligase</keyword>
<keyword id="KW-0547">Nucleotide-binding</keyword>
<keyword id="KW-0648">Protein biosynthesis</keyword>
<keyword id="KW-1185">Reference proteome</keyword>
<organism>
    <name type="scientific">Nostoc sp. (strain PCC 7120 / SAG 25.82 / UTEX 2576)</name>
    <dbReference type="NCBI Taxonomy" id="103690"/>
    <lineage>
        <taxon>Bacteria</taxon>
        <taxon>Bacillati</taxon>
        <taxon>Cyanobacteriota</taxon>
        <taxon>Cyanophyceae</taxon>
        <taxon>Nostocales</taxon>
        <taxon>Nostocaceae</taxon>
        <taxon>Nostoc</taxon>
    </lineage>
</organism>
<reference key="1">
    <citation type="journal article" date="2001" name="DNA Res.">
        <title>Complete genomic sequence of the filamentous nitrogen-fixing cyanobacterium Anabaena sp. strain PCC 7120.</title>
        <authorList>
            <person name="Kaneko T."/>
            <person name="Nakamura Y."/>
            <person name="Wolk C.P."/>
            <person name="Kuritz T."/>
            <person name="Sasamoto S."/>
            <person name="Watanabe A."/>
            <person name="Iriguchi M."/>
            <person name="Ishikawa A."/>
            <person name="Kawashima K."/>
            <person name="Kimura T."/>
            <person name="Kishida Y."/>
            <person name="Kohara M."/>
            <person name="Matsumoto M."/>
            <person name="Matsuno A."/>
            <person name="Muraki A."/>
            <person name="Nakazaki N."/>
            <person name="Shimpo S."/>
            <person name="Sugimoto M."/>
            <person name="Takazawa M."/>
            <person name="Yamada M."/>
            <person name="Yasuda M."/>
            <person name="Tabata S."/>
        </authorList>
    </citation>
    <scope>NUCLEOTIDE SEQUENCE [LARGE SCALE GENOMIC DNA]</scope>
    <source>
        <strain>PCC 7120 / SAG 25.82 / UTEX 2576</strain>
    </source>
</reference>
<accession>P58692</accession>
<comment type="catalytic activity">
    <reaction evidence="1">
        <text>tRNA(Asn) + L-asparagine + ATP = L-asparaginyl-tRNA(Asn) + AMP + diphosphate + H(+)</text>
        <dbReference type="Rhea" id="RHEA:11180"/>
        <dbReference type="Rhea" id="RHEA-COMP:9659"/>
        <dbReference type="Rhea" id="RHEA-COMP:9674"/>
        <dbReference type="ChEBI" id="CHEBI:15378"/>
        <dbReference type="ChEBI" id="CHEBI:30616"/>
        <dbReference type="ChEBI" id="CHEBI:33019"/>
        <dbReference type="ChEBI" id="CHEBI:58048"/>
        <dbReference type="ChEBI" id="CHEBI:78442"/>
        <dbReference type="ChEBI" id="CHEBI:78515"/>
        <dbReference type="ChEBI" id="CHEBI:456215"/>
        <dbReference type="EC" id="6.1.1.22"/>
    </reaction>
</comment>
<comment type="subunit">
    <text evidence="1">Homodimer.</text>
</comment>
<comment type="subcellular location">
    <subcellularLocation>
        <location evidence="1">Cytoplasm</location>
    </subcellularLocation>
</comment>
<comment type="similarity">
    <text evidence="1">Belongs to the class-II aminoacyl-tRNA synthetase family.</text>
</comment>
<name>SYN_NOSS1</name>
<sequence>MVNRRIAEILRSGQPDESLVVQGWVRTKRELKGFAFIEVNDGSSLGNLQVVINQDLPDYAVIVKQLNTGASVEVNGVLVASQGKGQRIELKAEAVKVYGEADPETYPLQKKRHSFEFLRTIGHLRSRTNSFGAVFRVRNACSAAIHQFFQERGFLWVHTPIITASDCEGAGELFSVTSLDLKQIPRTENQGIDYSQDFFAKPTYLTVSGQLEAEVMAMAFSNVYTFGPTFRAENSNTSRHLAEFWMVEPEMAFCDLEGDMDLAEAFLKHIFNHVLEKCPEDMEFFNQRIDNTVLATAENIINNQFERLTYTDAIKLLEKADVKFEYPVSWGLDLQSEHERYLAEQLFKKPVIVTDYPAQIKAFYMRLSDDEKTVRAMDVLAPKIGEIIGGSQREERLDVLERRVLAQGMQPEDLWWYLDLRRYGTVPHAGFGLGFERLVQFITGMGNIRDVIPFPRTPQNAEF</sequence>
<evidence type="ECO:0000255" key="1">
    <source>
        <dbReference type="HAMAP-Rule" id="MF_00534"/>
    </source>
</evidence>
<protein>
    <recommendedName>
        <fullName evidence="1">Asparagine--tRNA ligase</fullName>
        <ecNumber evidence="1">6.1.1.22</ecNumber>
    </recommendedName>
    <alternativeName>
        <fullName evidence="1">Asparaginyl-tRNA synthetase</fullName>
        <shortName evidence="1">AsnRS</shortName>
    </alternativeName>
</protein>
<feature type="chain" id="PRO_0000176384" description="Asparagine--tRNA ligase">
    <location>
        <begin position="1"/>
        <end position="463"/>
    </location>
</feature>
<gene>
    <name evidence="1" type="primary">asnS</name>
    <name type="ordered locus">alr3658</name>
</gene>
<dbReference type="EC" id="6.1.1.22" evidence="1"/>
<dbReference type="EMBL" id="BA000019">
    <property type="protein sequence ID" value="BAB75357.1"/>
    <property type="molecule type" value="Genomic_DNA"/>
</dbReference>
<dbReference type="PIR" id="AC2263">
    <property type="entry name" value="AC2263"/>
</dbReference>
<dbReference type="RefSeq" id="WP_010997802.1">
    <property type="nucleotide sequence ID" value="NZ_RSCN01000044.1"/>
</dbReference>
<dbReference type="SMR" id="P58692"/>
<dbReference type="STRING" id="103690.gene:10495700"/>
<dbReference type="KEGG" id="ana:alr3658"/>
<dbReference type="eggNOG" id="COG0017">
    <property type="taxonomic scope" value="Bacteria"/>
</dbReference>
<dbReference type="OrthoDB" id="9762036at2"/>
<dbReference type="Proteomes" id="UP000002483">
    <property type="component" value="Chromosome"/>
</dbReference>
<dbReference type="GO" id="GO:0005737">
    <property type="term" value="C:cytoplasm"/>
    <property type="evidence" value="ECO:0007669"/>
    <property type="project" value="UniProtKB-SubCell"/>
</dbReference>
<dbReference type="GO" id="GO:0004816">
    <property type="term" value="F:asparagine-tRNA ligase activity"/>
    <property type="evidence" value="ECO:0007669"/>
    <property type="project" value="UniProtKB-UniRule"/>
</dbReference>
<dbReference type="GO" id="GO:0005524">
    <property type="term" value="F:ATP binding"/>
    <property type="evidence" value="ECO:0007669"/>
    <property type="project" value="UniProtKB-UniRule"/>
</dbReference>
<dbReference type="GO" id="GO:0003676">
    <property type="term" value="F:nucleic acid binding"/>
    <property type="evidence" value="ECO:0007669"/>
    <property type="project" value="InterPro"/>
</dbReference>
<dbReference type="GO" id="GO:0006421">
    <property type="term" value="P:asparaginyl-tRNA aminoacylation"/>
    <property type="evidence" value="ECO:0007669"/>
    <property type="project" value="UniProtKB-UniRule"/>
</dbReference>
<dbReference type="CDD" id="cd00776">
    <property type="entry name" value="AsxRS_core"/>
    <property type="match status" value="1"/>
</dbReference>
<dbReference type="CDD" id="cd04318">
    <property type="entry name" value="EcAsnRS_like_N"/>
    <property type="match status" value="1"/>
</dbReference>
<dbReference type="FunFam" id="3.30.930.10:FF:000016">
    <property type="entry name" value="Asparagine--tRNA ligase"/>
    <property type="match status" value="1"/>
</dbReference>
<dbReference type="Gene3D" id="3.30.930.10">
    <property type="entry name" value="Bira Bifunctional Protein, Domain 2"/>
    <property type="match status" value="1"/>
</dbReference>
<dbReference type="Gene3D" id="2.40.50.140">
    <property type="entry name" value="Nucleic acid-binding proteins"/>
    <property type="match status" value="1"/>
</dbReference>
<dbReference type="HAMAP" id="MF_00534">
    <property type="entry name" value="Asn_tRNA_synth"/>
    <property type="match status" value="1"/>
</dbReference>
<dbReference type="InterPro" id="IPR004364">
    <property type="entry name" value="Aa-tRNA-synt_II"/>
</dbReference>
<dbReference type="InterPro" id="IPR006195">
    <property type="entry name" value="aa-tRNA-synth_II"/>
</dbReference>
<dbReference type="InterPro" id="IPR045864">
    <property type="entry name" value="aa-tRNA-synth_II/BPL/LPL"/>
</dbReference>
<dbReference type="InterPro" id="IPR004522">
    <property type="entry name" value="Asn-tRNA-ligase"/>
</dbReference>
<dbReference type="InterPro" id="IPR002312">
    <property type="entry name" value="Asp/Asn-tRNA-synth_IIb"/>
</dbReference>
<dbReference type="InterPro" id="IPR012340">
    <property type="entry name" value="NA-bd_OB-fold"/>
</dbReference>
<dbReference type="InterPro" id="IPR004365">
    <property type="entry name" value="NA-bd_OB_tRNA"/>
</dbReference>
<dbReference type="NCBIfam" id="TIGR00457">
    <property type="entry name" value="asnS"/>
    <property type="match status" value="1"/>
</dbReference>
<dbReference type="NCBIfam" id="NF003037">
    <property type="entry name" value="PRK03932.1"/>
    <property type="match status" value="1"/>
</dbReference>
<dbReference type="PANTHER" id="PTHR22594:SF34">
    <property type="entry name" value="ASPARAGINE--TRNA LIGASE, MITOCHONDRIAL-RELATED"/>
    <property type="match status" value="1"/>
</dbReference>
<dbReference type="PANTHER" id="PTHR22594">
    <property type="entry name" value="ASPARTYL/LYSYL-TRNA SYNTHETASE"/>
    <property type="match status" value="1"/>
</dbReference>
<dbReference type="Pfam" id="PF00152">
    <property type="entry name" value="tRNA-synt_2"/>
    <property type="match status" value="1"/>
</dbReference>
<dbReference type="Pfam" id="PF01336">
    <property type="entry name" value="tRNA_anti-codon"/>
    <property type="match status" value="1"/>
</dbReference>
<dbReference type="PRINTS" id="PR01042">
    <property type="entry name" value="TRNASYNTHASP"/>
</dbReference>
<dbReference type="SUPFAM" id="SSF55681">
    <property type="entry name" value="Class II aaRS and biotin synthetases"/>
    <property type="match status" value="1"/>
</dbReference>
<dbReference type="SUPFAM" id="SSF50249">
    <property type="entry name" value="Nucleic acid-binding proteins"/>
    <property type="match status" value="1"/>
</dbReference>
<dbReference type="PROSITE" id="PS50862">
    <property type="entry name" value="AA_TRNA_LIGASE_II"/>
    <property type="match status" value="1"/>
</dbReference>
<proteinExistence type="inferred from homology"/>